<evidence type="ECO:0000255" key="1">
    <source>
        <dbReference type="HAMAP-Rule" id="MF_00089"/>
    </source>
</evidence>
<sequence length="633" mass="71177">MTTPKKTAKTSGNEARELADLSEDIGIRFKYPNSERVYLQGSRDDIRVPLREIRQDDTYTAQGAEANPPIPVYDTSGVYGDPAAHIDLKQGLPHIRTVWLDERGDTEILPKLSSEYGIERAHDPKTAHLRFNQITRPRRAKAGRNVTQLHYARQGIITPEMEFVAIRERLKLDELSQKPEYAKLLKQHAGQSFGANIPTHPDQITPEFVRREIAAGRAIIPANINHPELEPMIIGRNFRVKINGNLGNSAVTSSLTEEVEKMVWSLRWGADTIMDLSTGAHIHETREWIIRNAPVPIGTVPIYQALEKTGGIAEDLTWDLFRDTLIEQAEQGVDYFTIHAGVLLRYVPMTANRLTGIVSRGGSIMAKWCLAHHRENFLYTHFDEICEIMKAYDVSFSLGDGLRPGCIADANDESQFAELHTLGELTDKAWKHDVQVMIEGPGHVPLQRVKENMTEELQHCFEAPFYTLGPLVTDIAPGYDHITSGIGAANIGWYGTAMLCYVTPKEHLGLPDKEDVRTGIITYKLAAHAADLAKGWPGAQLRDNALSKARFEFRWRDQFRLSLDPERAESFHDETLPAEGAKIAHFCSMCGPKFCSMKITQEVRDYADKQKAQRQGMEEKAVEFVKKGAKIYS</sequence>
<name>THIC_NEIMA</name>
<protein>
    <recommendedName>
        <fullName evidence="1">Phosphomethylpyrimidine synthase</fullName>
        <ecNumber evidence="1">4.1.99.17</ecNumber>
    </recommendedName>
    <alternativeName>
        <fullName evidence="1">Hydroxymethylpyrimidine phosphate synthase</fullName>
        <shortName evidence="1">HMP-P synthase</shortName>
        <shortName evidence="1">HMP-phosphate synthase</shortName>
        <shortName evidence="1">HMPP synthase</shortName>
    </alternativeName>
    <alternativeName>
        <fullName evidence="1">Thiamine biosynthesis protein ThiC</fullName>
    </alternativeName>
</protein>
<keyword id="KW-0004">4Fe-4S</keyword>
<keyword id="KW-0408">Iron</keyword>
<keyword id="KW-0411">Iron-sulfur</keyword>
<keyword id="KW-0456">Lyase</keyword>
<keyword id="KW-0479">Metal-binding</keyword>
<keyword id="KW-0949">S-adenosyl-L-methionine</keyword>
<keyword id="KW-0784">Thiamine biosynthesis</keyword>
<keyword id="KW-0862">Zinc</keyword>
<gene>
    <name evidence="1" type="primary">thiC</name>
    <name type="ordered locus">NMA0397</name>
</gene>
<feature type="chain" id="PRO_0000152817" description="Phosphomethylpyrimidine synthase">
    <location>
        <begin position="1"/>
        <end position="633"/>
    </location>
</feature>
<feature type="binding site" evidence="1">
    <location>
        <position position="245"/>
    </location>
    <ligand>
        <name>substrate</name>
    </ligand>
</feature>
<feature type="binding site" evidence="1">
    <location>
        <position position="274"/>
    </location>
    <ligand>
        <name>substrate</name>
    </ligand>
</feature>
<feature type="binding site" evidence="1">
    <location>
        <position position="303"/>
    </location>
    <ligand>
        <name>substrate</name>
    </ligand>
</feature>
<feature type="binding site" evidence="1">
    <location>
        <position position="339"/>
    </location>
    <ligand>
        <name>substrate</name>
    </ligand>
</feature>
<feature type="binding site" evidence="1">
    <location>
        <begin position="359"/>
        <end position="361"/>
    </location>
    <ligand>
        <name>substrate</name>
    </ligand>
</feature>
<feature type="binding site" evidence="1">
    <location>
        <begin position="400"/>
        <end position="403"/>
    </location>
    <ligand>
        <name>substrate</name>
    </ligand>
</feature>
<feature type="binding site" evidence="1">
    <location>
        <position position="439"/>
    </location>
    <ligand>
        <name>substrate</name>
    </ligand>
</feature>
<feature type="binding site" evidence="1">
    <location>
        <position position="443"/>
    </location>
    <ligand>
        <name>Zn(2+)</name>
        <dbReference type="ChEBI" id="CHEBI:29105"/>
    </ligand>
</feature>
<feature type="binding site" evidence="1">
    <location>
        <position position="466"/>
    </location>
    <ligand>
        <name>substrate</name>
    </ligand>
</feature>
<feature type="binding site" evidence="1">
    <location>
        <position position="507"/>
    </location>
    <ligand>
        <name>Zn(2+)</name>
        <dbReference type="ChEBI" id="CHEBI:29105"/>
    </ligand>
</feature>
<feature type="binding site" evidence="1">
    <location>
        <position position="587"/>
    </location>
    <ligand>
        <name>[4Fe-4S] cluster</name>
        <dbReference type="ChEBI" id="CHEBI:49883"/>
        <note>4Fe-4S-S-AdoMet</note>
    </ligand>
</feature>
<feature type="binding site" evidence="1">
    <location>
        <position position="590"/>
    </location>
    <ligand>
        <name>[4Fe-4S] cluster</name>
        <dbReference type="ChEBI" id="CHEBI:49883"/>
        <note>4Fe-4S-S-AdoMet</note>
    </ligand>
</feature>
<feature type="binding site" evidence="1">
    <location>
        <position position="595"/>
    </location>
    <ligand>
        <name>[4Fe-4S] cluster</name>
        <dbReference type="ChEBI" id="CHEBI:49883"/>
        <note>4Fe-4S-S-AdoMet</note>
    </ligand>
</feature>
<comment type="function">
    <text evidence="1">Catalyzes the synthesis of the hydroxymethylpyrimidine phosphate (HMP-P) moiety of thiamine from aminoimidazole ribotide (AIR) in a radical S-adenosyl-L-methionine (SAM)-dependent reaction.</text>
</comment>
<comment type="catalytic activity">
    <reaction evidence="1">
        <text>5-amino-1-(5-phospho-beta-D-ribosyl)imidazole + S-adenosyl-L-methionine = 4-amino-2-methyl-5-(phosphooxymethyl)pyrimidine + CO + 5'-deoxyadenosine + formate + L-methionine + 3 H(+)</text>
        <dbReference type="Rhea" id="RHEA:24840"/>
        <dbReference type="ChEBI" id="CHEBI:15378"/>
        <dbReference type="ChEBI" id="CHEBI:15740"/>
        <dbReference type="ChEBI" id="CHEBI:17245"/>
        <dbReference type="ChEBI" id="CHEBI:17319"/>
        <dbReference type="ChEBI" id="CHEBI:57844"/>
        <dbReference type="ChEBI" id="CHEBI:58354"/>
        <dbReference type="ChEBI" id="CHEBI:59789"/>
        <dbReference type="ChEBI" id="CHEBI:137981"/>
        <dbReference type="EC" id="4.1.99.17"/>
    </reaction>
</comment>
<comment type="cofactor">
    <cofactor evidence="1">
        <name>[4Fe-4S] cluster</name>
        <dbReference type="ChEBI" id="CHEBI:49883"/>
    </cofactor>
    <text evidence="1">Binds 1 [4Fe-4S] cluster per subunit. The cluster is coordinated with 3 cysteines and an exchangeable S-adenosyl-L-methionine.</text>
</comment>
<comment type="pathway">
    <text evidence="1">Cofactor biosynthesis; thiamine diphosphate biosynthesis.</text>
</comment>
<comment type="subunit">
    <text evidence="1">Homodimer.</text>
</comment>
<comment type="similarity">
    <text evidence="1">Belongs to the ThiC family.</text>
</comment>
<proteinExistence type="inferred from homology"/>
<organism>
    <name type="scientific">Neisseria meningitidis serogroup A / serotype 4A (strain DSM 15465 / Z2491)</name>
    <dbReference type="NCBI Taxonomy" id="122587"/>
    <lineage>
        <taxon>Bacteria</taxon>
        <taxon>Pseudomonadati</taxon>
        <taxon>Pseudomonadota</taxon>
        <taxon>Betaproteobacteria</taxon>
        <taxon>Neisseriales</taxon>
        <taxon>Neisseriaceae</taxon>
        <taxon>Neisseria</taxon>
    </lineage>
</organism>
<dbReference type="EC" id="4.1.99.17" evidence="1"/>
<dbReference type="EMBL" id="AL157959">
    <property type="protein sequence ID" value="CAM07687.1"/>
    <property type="molecule type" value="Genomic_DNA"/>
</dbReference>
<dbReference type="PIR" id="C81956">
    <property type="entry name" value="C81956"/>
</dbReference>
<dbReference type="RefSeq" id="WP_010981073.1">
    <property type="nucleotide sequence ID" value="NC_003116.1"/>
</dbReference>
<dbReference type="SMR" id="Q9JWF3"/>
<dbReference type="EnsemblBacteria" id="CAM07687">
    <property type="protein sequence ID" value="CAM07687"/>
    <property type="gene ID" value="NMA0397"/>
</dbReference>
<dbReference type="KEGG" id="nma:NMA0397"/>
<dbReference type="HOGENOM" id="CLU_013181_2_1_4"/>
<dbReference type="UniPathway" id="UPA00060"/>
<dbReference type="Proteomes" id="UP000000626">
    <property type="component" value="Chromosome"/>
</dbReference>
<dbReference type="GO" id="GO:0005829">
    <property type="term" value="C:cytosol"/>
    <property type="evidence" value="ECO:0007669"/>
    <property type="project" value="TreeGrafter"/>
</dbReference>
<dbReference type="GO" id="GO:0051539">
    <property type="term" value="F:4 iron, 4 sulfur cluster binding"/>
    <property type="evidence" value="ECO:0007669"/>
    <property type="project" value="UniProtKB-KW"/>
</dbReference>
<dbReference type="GO" id="GO:0016830">
    <property type="term" value="F:carbon-carbon lyase activity"/>
    <property type="evidence" value="ECO:0007669"/>
    <property type="project" value="InterPro"/>
</dbReference>
<dbReference type="GO" id="GO:0008270">
    <property type="term" value="F:zinc ion binding"/>
    <property type="evidence" value="ECO:0007669"/>
    <property type="project" value="UniProtKB-UniRule"/>
</dbReference>
<dbReference type="GO" id="GO:0009228">
    <property type="term" value="P:thiamine biosynthetic process"/>
    <property type="evidence" value="ECO:0007669"/>
    <property type="project" value="UniProtKB-KW"/>
</dbReference>
<dbReference type="GO" id="GO:0009229">
    <property type="term" value="P:thiamine diphosphate biosynthetic process"/>
    <property type="evidence" value="ECO:0007669"/>
    <property type="project" value="UniProtKB-UniRule"/>
</dbReference>
<dbReference type="FunFam" id="3.20.20.540:FF:000001">
    <property type="entry name" value="Phosphomethylpyrimidine synthase"/>
    <property type="match status" value="1"/>
</dbReference>
<dbReference type="Gene3D" id="6.10.250.620">
    <property type="match status" value="1"/>
</dbReference>
<dbReference type="Gene3D" id="3.20.20.540">
    <property type="entry name" value="Radical SAM ThiC family, central domain"/>
    <property type="match status" value="1"/>
</dbReference>
<dbReference type="HAMAP" id="MF_00089">
    <property type="entry name" value="ThiC"/>
    <property type="match status" value="1"/>
</dbReference>
<dbReference type="InterPro" id="IPR037509">
    <property type="entry name" value="ThiC"/>
</dbReference>
<dbReference type="InterPro" id="IPR025747">
    <property type="entry name" value="ThiC-associated_dom"/>
</dbReference>
<dbReference type="InterPro" id="IPR038521">
    <property type="entry name" value="ThiC/Bza_core_dom"/>
</dbReference>
<dbReference type="InterPro" id="IPR002817">
    <property type="entry name" value="ThiC/BzaA/B"/>
</dbReference>
<dbReference type="NCBIfam" id="NF006763">
    <property type="entry name" value="PRK09284.1"/>
    <property type="match status" value="1"/>
</dbReference>
<dbReference type="NCBIfam" id="NF009895">
    <property type="entry name" value="PRK13352.1"/>
    <property type="match status" value="1"/>
</dbReference>
<dbReference type="NCBIfam" id="TIGR00190">
    <property type="entry name" value="thiC"/>
    <property type="match status" value="1"/>
</dbReference>
<dbReference type="PANTHER" id="PTHR30557:SF1">
    <property type="entry name" value="PHOSPHOMETHYLPYRIMIDINE SYNTHASE, CHLOROPLASTIC"/>
    <property type="match status" value="1"/>
</dbReference>
<dbReference type="PANTHER" id="PTHR30557">
    <property type="entry name" value="THIAMINE BIOSYNTHESIS PROTEIN THIC"/>
    <property type="match status" value="1"/>
</dbReference>
<dbReference type="Pfam" id="PF13667">
    <property type="entry name" value="ThiC-associated"/>
    <property type="match status" value="1"/>
</dbReference>
<dbReference type="Pfam" id="PF01964">
    <property type="entry name" value="ThiC_Rad_SAM"/>
    <property type="match status" value="1"/>
</dbReference>
<dbReference type="SFLD" id="SFLDF00407">
    <property type="entry name" value="phosphomethylpyrimidine_syntha"/>
    <property type="match status" value="1"/>
</dbReference>
<dbReference type="SFLD" id="SFLDG01114">
    <property type="entry name" value="phosphomethylpyrimidine_syntha"/>
    <property type="match status" value="1"/>
</dbReference>
<dbReference type="SFLD" id="SFLDS00113">
    <property type="entry name" value="Radical_SAM_Phosphomethylpyrim"/>
    <property type="match status" value="1"/>
</dbReference>
<accession>Q9JWF3</accession>
<accession>A1IPL7</accession>
<reference key="1">
    <citation type="journal article" date="2000" name="Nature">
        <title>Complete DNA sequence of a serogroup A strain of Neisseria meningitidis Z2491.</title>
        <authorList>
            <person name="Parkhill J."/>
            <person name="Achtman M."/>
            <person name="James K.D."/>
            <person name="Bentley S.D."/>
            <person name="Churcher C.M."/>
            <person name="Klee S.R."/>
            <person name="Morelli G."/>
            <person name="Basham D."/>
            <person name="Brown D."/>
            <person name="Chillingworth T."/>
            <person name="Davies R.M."/>
            <person name="Davis P."/>
            <person name="Devlin K."/>
            <person name="Feltwell T."/>
            <person name="Hamlin N."/>
            <person name="Holroyd S."/>
            <person name="Jagels K."/>
            <person name="Leather S."/>
            <person name="Moule S."/>
            <person name="Mungall K.L."/>
            <person name="Quail M.A."/>
            <person name="Rajandream M.A."/>
            <person name="Rutherford K.M."/>
            <person name="Simmonds M."/>
            <person name="Skelton J."/>
            <person name="Whitehead S."/>
            <person name="Spratt B.G."/>
            <person name="Barrell B.G."/>
        </authorList>
    </citation>
    <scope>NUCLEOTIDE SEQUENCE [LARGE SCALE GENOMIC DNA]</scope>
    <source>
        <strain>DSM 15465 / Z2491</strain>
    </source>
</reference>